<organism>
    <name type="scientific">Homo sapiens</name>
    <name type="common">Human</name>
    <dbReference type="NCBI Taxonomy" id="9606"/>
    <lineage>
        <taxon>Eukaryota</taxon>
        <taxon>Metazoa</taxon>
        <taxon>Chordata</taxon>
        <taxon>Craniata</taxon>
        <taxon>Vertebrata</taxon>
        <taxon>Euteleostomi</taxon>
        <taxon>Mammalia</taxon>
        <taxon>Eutheria</taxon>
        <taxon>Euarchontoglires</taxon>
        <taxon>Primates</taxon>
        <taxon>Haplorrhini</taxon>
        <taxon>Catarrhini</taxon>
        <taxon>Hominidae</taxon>
        <taxon>Homo</taxon>
    </lineage>
</organism>
<comment type="function">
    <text evidence="1">Highly specific for ethanolamine phosphorylation. Does not have choline kinase activity (By similarity).</text>
</comment>
<comment type="catalytic activity">
    <reaction>
        <text>ethanolamine + ATP = phosphoethanolamine + ADP + H(+)</text>
        <dbReference type="Rhea" id="RHEA:13069"/>
        <dbReference type="ChEBI" id="CHEBI:15378"/>
        <dbReference type="ChEBI" id="CHEBI:30616"/>
        <dbReference type="ChEBI" id="CHEBI:57603"/>
        <dbReference type="ChEBI" id="CHEBI:58190"/>
        <dbReference type="ChEBI" id="CHEBI:456216"/>
        <dbReference type="EC" id="2.7.1.82"/>
    </reaction>
</comment>
<comment type="pathway">
    <text>Phospholipid metabolism; phosphatidylethanolamine biosynthesis; phosphatidylethanolamine from ethanolamine: step 1/3.</text>
</comment>
<comment type="interaction">
    <interactant intactId="EBI-751864">
        <id>Q9NVF9</id>
    </interactant>
    <interactant intactId="EBI-11954292">
        <id>Q86V38</id>
        <label>ATN1</label>
    </interactant>
    <organismsDiffer>false</organismsDiffer>
    <experiments>3</experiments>
</comment>
<comment type="interaction">
    <interactant intactId="EBI-751864">
        <id>Q9NVF9</id>
    </interactant>
    <interactant intactId="EBI-3867333">
        <id>A8MQ03</id>
        <label>CYSRT1</label>
    </interactant>
    <organismsDiffer>false</organismsDiffer>
    <experiments>3</experiments>
</comment>
<comment type="interaction">
    <interactant intactId="EBI-751864">
        <id>Q9NVF9</id>
    </interactant>
    <interactant intactId="EBI-7060731">
        <id>P61978-2</id>
        <label>HNRNPK</label>
    </interactant>
    <organismsDiffer>false</organismsDiffer>
    <experiments>3</experiments>
</comment>
<comment type="interaction">
    <interactant intactId="EBI-751864">
        <id>Q9NVF9</id>
    </interactant>
    <interactant intactId="EBI-10176379">
        <id>P59991</id>
        <label>KRTAP12-2</label>
    </interactant>
    <organismsDiffer>false</organismsDiffer>
    <experiments>3</experiments>
</comment>
<comment type="interaction">
    <interactant intactId="EBI-751864">
        <id>Q9NVF9</id>
    </interactant>
    <interactant intactId="EBI-10172526">
        <id>Q9UJV3-2</id>
        <label>MID2</label>
    </interactant>
    <organismsDiffer>false</organismsDiffer>
    <experiments>3</experiments>
</comment>
<comment type="interaction">
    <interactant intactId="EBI-751864">
        <id>Q9NVF9</id>
    </interactant>
    <interactant intactId="EBI-712466">
        <id>Q16623</id>
        <label>STX1A</label>
    </interactant>
    <organismsDiffer>false</organismsDiffer>
    <experiments>3</experiments>
</comment>
<comment type="alternative products">
    <event type="alternative splicing"/>
    <isoform>
        <id>Q9NVF9-1</id>
        <name>1</name>
        <sequence type="displayed"/>
    </isoform>
    <isoform>
        <id>Q9NVF9-2</id>
        <name>2</name>
        <sequence type="described" ref="VSP_039098"/>
    </isoform>
    <isoform>
        <id>Q9NVF9-3</id>
        <name>3</name>
        <sequence type="described" ref="VSP_039558"/>
    </isoform>
</comment>
<comment type="tissue specificity">
    <text evidence="2">Expressed in kidney, liver, ovary, testis and prostate.</text>
</comment>
<comment type="similarity">
    <text evidence="5">Belongs to the choline/ethanolamine kinase family.</text>
</comment>
<comment type="sequence caution" evidence="5">
    <conflict type="erroneous initiation">
        <sequence resource="EMBL-CDS" id="BAH13637"/>
    </conflict>
    <text>Truncated N-terminus.</text>
</comment>
<proteinExistence type="evidence at protein level"/>
<sequence>MAVPPSAPQPRASFHLRRHTPCPQCSWGMEEKAAASASCREPPGPPRAAAVAYFGISVDPDDILPGALRLIQELRPHWKPEQVRTKRFTDGITNKLVACYVEEDMQDCVLVRVYGERTELLVDRENEVRNFQLLRAHSCAPKLYCTFQNGLCYEYMQGVALEPEHIREPRLFRLIALEMAKIHTIHANGSLPKPILWHKMHNYFTLVKNEINPSLSADVPKVEVLERELAWLKEHLSQLESPVVFCHNDLLCKNIIYDSIKGHVRFIDYEYAGYNYQAFDIGNHFNEFAGVNEVDYCLYPARETQLQWLHYYLQAQKGMAVTPREVQRLYVQVNKFALASHFFWALWALIQNQYSTIDFDFLRYAVIRFNQYFKVKPQASALEMPK</sequence>
<dbReference type="EC" id="2.7.1.82"/>
<dbReference type="EMBL" id="AK001623">
    <property type="protein sequence ID" value="BAA91793.1"/>
    <property type="molecule type" value="mRNA"/>
</dbReference>
<dbReference type="EMBL" id="AK302145">
    <property type="protein sequence ID" value="BAH13637.1"/>
    <property type="status" value="ALT_INIT"/>
    <property type="molecule type" value="mRNA"/>
</dbReference>
<dbReference type="EMBL" id="AL592146">
    <property type="status" value="NOT_ANNOTATED_CDS"/>
    <property type="molecule type" value="Genomic_DNA"/>
</dbReference>
<dbReference type="EMBL" id="CH471067">
    <property type="protein sequence ID" value="EAW91501.1"/>
    <property type="molecule type" value="Genomic_DNA"/>
</dbReference>
<dbReference type="EMBL" id="CH471067">
    <property type="protein sequence ID" value="EAW91502.1"/>
    <property type="molecule type" value="Genomic_DNA"/>
</dbReference>
<dbReference type="EMBL" id="BC010082">
    <property type="protein sequence ID" value="AAH10082.1"/>
    <property type="molecule type" value="mRNA"/>
</dbReference>
<dbReference type="EMBL" id="AB073608">
    <property type="protein sequence ID" value="BAD38645.1"/>
    <property type="molecule type" value="mRNA"/>
</dbReference>
<dbReference type="CCDS" id="CCDS1442.2">
    <molecule id="Q9NVF9-1"/>
</dbReference>
<dbReference type="CCDS" id="CCDS73006.1">
    <molecule id="Q9NVF9-2"/>
</dbReference>
<dbReference type="RefSeq" id="NP_001284689.1">
    <molecule id="Q9NVF9-2"/>
    <property type="nucleotide sequence ID" value="NM_001297760.2"/>
</dbReference>
<dbReference type="RefSeq" id="NP_001284690.1">
    <property type="nucleotide sequence ID" value="NM_001297761.1"/>
</dbReference>
<dbReference type="RefSeq" id="NP_001284691.1">
    <molecule id="Q9NVF9-3"/>
    <property type="nucleotide sequence ID" value="NM_001297762.2"/>
</dbReference>
<dbReference type="RefSeq" id="NP_060678.2">
    <molecule id="Q9NVF9-1"/>
    <property type="nucleotide sequence ID" value="NM_018208.4"/>
</dbReference>
<dbReference type="SMR" id="Q9NVF9"/>
<dbReference type="BioGRID" id="120519">
    <property type="interactions" value="20"/>
</dbReference>
<dbReference type="FunCoup" id="Q9NVF9">
    <property type="interactions" value="652"/>
</dbReference>
<dbReference type="IntAct" id="Q9NVF9">
    <property type="interactions" value="19"/>
</dbReference>
<dbReference type="STRING" id="9606.ENSP00000356169"/>
<dbReference type="GlyGen" id="Q9NVF9">
    <property type="glycosylation" value="1 site"/>
</dbReference>
<dbReference type="iPTMnet" id="Q9NVF9"/>
<dbReference type="PhosphoSitePlus" id="Q9NVF9"/>
<dbReference type="BioMuta" id="ETNK2"/>
<dbReference type="DMDM" id="296439366"/>
<dbReference type="jPOST" id="Q9NVF9"/>
<dbReference type="MassIVE" id="Q9NVF9"/>
<dbReference type="PaxDb" id="9606-ENSP00000356169"/>
<dbReference type="PeptideAtlas" id="Q9NVF9"/>
<dbReference type="ProteomicsDB" id="82790">
    <molecule id="Q9NVF9-1"/>
</dbReference>
<dbReference type="ProteomicsDB" id="82791">
    <molecule id="Q9NVF9-2"/>
</dbReference>
<dbReference type="ProteomicsDB" id="82792">
    <molecule id="Q9NVF9-3"/>
</dbReference>
<dbReference type="Pumba" id="Q9NVF9"/>
<dbReference type="Antibodypedia" id="34553">
    <property type="antibodies" value="164 antibodies from 25 providers"/>
</dbReference>
<dbReference type="DNASU" id="55224"/>
<dbReference type="Ensembl" id="ENST00000367201.7">
    <molecule id="Q9NVF9-2"/>
    <property type="protein sequence ID" value="ENSP00000356169.3"/>
    <property type="gene ID" value="ENSG00000143845.15"/>
</dbReference>
<dbReference type="Ensembl" id="ENST00000367202.9">
    <molecule id="Q9NVF9-1"/>
    <property type="protein sequence ID" value="ENSP00000356170.4"/>
    <property type="gene ID" value="ENSG00000143845.15"/>
</dbReference>
<dbReference type="GeneID" id="55224"/>
<dbReference type="KEGG" id="hsa:55224"/>
<dbReference type="MANE-Select" id="ENST00000367202.9">
    <property type="protein sequence ID" value="ENSP00000356170.4"/>
    <property type="RefSeq nucleotide sequence ID" value="NM_018208.4"/>
    <property type="RefSeq protein sequence ID" value="NP_060678.2"/>
</dbReference>
<dbReference type="UCSC" id="uc001han.5">
    <molecule id="Q9NVF9-1"/>
    <property type="organism name" value="human"/>
</dbReference>
<dbReference type="AGR" id="HGNC:25575"/>
<dbReference type="CTD" id="55224"/>
<dbReference type="DisGeNET" id="55224"/>
<dbReference type="GeneCards" id="ETNK2"/>
<dbReference type="HGNC" id="HGNC:25575">
    <property type="gene designation" value="ETNK2"/>
</dbReference>
<dbReference type="HPA" id="ENSG00000143845">
    <property type="expression patterns" value="Tissue enhanced (kidney, liver, testis)"/>
</dbReference>
<dbReference type="MIM" id="609859">
    <property type="type" value="gene"/>
</dbReference>
<dbReference type="neXtProt" id="NX_Q9NVF9"/>
<dbReference type="OpenTargets" id="ENSG00000143845"/>
<dbReference type="PharmGKB" id="PA134888760"/>
<dbReference type="VEuPathDB" id="HostDB:ENSG00000143845"/>
<dbReference type="eggNOG" id="KOG4720">
    <property type="taxonomic scope" value="Eukaryota"/>
</dbReference>
<dbReference type="GeneTree" id="ENSGT00950000182939"/>
<dbReference type="HOGENOM" id="CLU_012712_1_0_1"/>
<dbReference type="InParanoid" id="Q9NVF9"/>
<dbReference type="OMA" id="PMIWTKT"/>
<dbReference type="OrthoDB" id="10267235at2759"/>
<dbReference type="PAN-GO" id="Q9NVF9">
    <property type="GO annotations" value="3 GO annotations based on evolutionary models"/>
</dbReference>
<dbReference type="PhylomeDB" id="Q9NVF9"/>
<dbReference type="TreeFam" id="TF313549"/>
<dbReference type="BRENDA" id="2.7.1.82">
    <property type="organism ID" value="2681"/>
</dbReference>
<dbReference type="PathwayCommons" id="Q9NVF9"/>
<dbReference type="Reactome" id="R-HSA-1483213">
    <property type="pathway name" value="Synthesis of PE"/>
</dbReference>
<dbReference type="SignaLink" id="Q9NVF9"/>
<dbReference type="SIGNOR" id="Q9NVF9"/>
<dbReference type="UniPathway" id="UPA00558">
    <property type="reaction ID" value="UER00741"/>
</dbReference>
<dbReference type="BioGRID-ORCS" id="55224">
    <property type="hits" value="19 hits in 1153 CRISPR screens"/>
</dbReference>
<dbReference type="ChiTaRS" id="ETNK2">
    <property type="organism name" value="human"/>
</dbReference>
<dbReference type="GenomeRNAi" id="55224"/>
<dbReference type="Pharos" id="Q9NVF9">
    <property type="development level" value="Tbio"/>
</dbReference>
<dbReference type="PRO" id="PR:Q9NVF9"/>
<dbReference type="Proteomes" id="UP000005640">
    <property type="component" value="Chromosome 1"/>
</dbReference>
<dbReference type="RNAct" id="Q9NVF9">
    <property type="molecule type" value="protein"/>
</dbReference>
<dbReference type="Bgee" id="ENSG00000143845">
    <property type="expression patterns" value="Expressed in right testis and 118 other cell types or tissues"/>
</dbReference>
<dbReference type="ExpressionAtlas" id="Q9NVF9">
    <property type="expression patterns" value="baseline and differential"/>
</dbReference>
<dbReference type="GO" id="GO:0005737">
    <property type="term" value="C:cytoplasm"/>
    <property type="evidence" value="ECO:0000318"/>
    <property type="project" value="GO_Central"/>
</dbReference>
<dbReference type="GO" id="GO:0005829">
    <property type="term" value="C:cytosol"/>
    <property type="evidence" value="ECO:0000304"/>
    <property type="project" value="Reactome"/>
</dbReference>
<dbReference type="GO" id="GO:0005524">
    <property type="term" value="F:ATP binding"/>
    <property type="evidence" value="ECO:0007669"/>
    <property type="project" value="UniProtKB-KW"/>
</dbReference>
<dbReference type="GO" id="GO:0004305">
    <property type="term" value="F:ethanolamine kinase activity"/>
    <property type="evidence" value="ECO:0000318"/>
    <property type="project" value="GO_Central"/>
</dbReference>
<dbReference type="GO" id="GO:0001701">
    <property type="term" value="P:in utero embryonic development"/>
    <property type="evidence" value="ECO:0007669"/>
    <property type="project" value="Ensembl"/>
</dbReference>
<dbReference type="GO" id="GO:0035264">
    <property type="term" value="P:multicellular organism growth"/>
    <property type="evidence" value="ECO:0007669"/>
    <property type="project" value="Ensembl"/>
</dbReference>
<dbReference type="GO" id="GO:0006646">
    <property type="term" value="P:phosphatidylethanolamine biosynthetic process"/>
    <property type="evidence" value="ECO:0000318"/>
    <property type="project" value="GO_Central"/>
</dbReference>
<dbReference type="GO" id="GO:0001890">
    <property type="term" value="P:placenta development"/>
    <property type="evidence" value="ECO:0007669"/>
    <property type="project" value="Ensembl"/>
</dbReference>
<dbReference type="GO" id="GO:0009791">
    <property type="term" value="P:post-embryonic development"/>
    <property type="evidence" value="ECO:0007669"/>
    <property type="project" value="Ensembl"/>
</dbReference>
<dbReference type="CDD" id="cd05157">
    <property type="entry name" value="ETNK_euk"/>
    <property type="match status" value="1"/>
</dbReference>
<dbReference type="FunFam" id="3.90.1200.10:FF:000002">
    <property type="entry name" value="Ethanolamine kinase 1"/>
    <property type="match status" value="1"/>
</dbReference>
<dbReference type="Gene3D" id="3.90.1200.10">
    <property type="match status" value="1"/>
</dbReference>
<dbReference type="Gene3D" id="3.30.200.20">
    <property type="entry name" value="Phosphorylase Kinase, domain 1"/>
    <property type="match status" value="1"/>
</dbReference>
<dbReference type="InterPro" id="IPR011009">
    <property type="entry name" value="Kinase-like_dom_sf"/>
</dbReference>
<dbReference type="PANTHER" id="PTHR22603">
    <property type="entry name" value="CHOLINE/ETHANOALAMINE KINASE"/>
    <property type="match status" value="1"/>
</dbReference>
<dbReference type="PANTHER" id="PTHR22603:SF94">
    <property type="entry name" value="ETHANOLAMINE KINASE 2"/>
    <property type="match status" value="1"/>
</dbReference>
<dbReference type="Pfam" id="PF01633">
    <property type="entry name" value="Choline_kinase"/>
    <property type="match status" value="1"/>
</dbReference>
<dbReference type="SUPFAM" id="SSF56112">
    <property type="entry name" value="Protein kinase-like (PK-like)"/>
    <property type="match status" value="1"/>
</dbReference>
<keyword id="KW-0025">Alternative splicing</keyword>
<keyword id="KW-0067">ATP-binding</keyword>
<keyword id="KW-0418">Kinase</keyword>
<keyword id="KW-0444">Lipid biosynthesis</keyword>
<keyword id="KW-0443">Lipid metabolism</keyword>
<keyword id="KW-0547">Nucleotide-binding</keyword>
<keyword id="KW-0594">Phospholipid biosynthesis</keyword>
<keyword id="KW-1208">Phospholipid metabolism</keyword>
<keyword id="KW-1267">Proteomics identification</keyword>
<keyword id="KW-1185">Reference proteome</keyword>
<keyword id="KW-0808">Transferase</keyword>
<feature type="chain" id="PRO_0000206229" description="Ethanolamine kinase 2">
    <location>
        <begin position="1"/>
        <end position="386"/>
    </location>
</feature>
<feature type="splice variant" id="VSP_039558" description="In isoform 3." evidence="4">
    <location>
        <begin position="173"/>
        <end position="213"/>
    </location>
</feature>
<feature type="splice variant" id="VSP_039098" description="In isoform 2." evidence="4">
    <original>ASHFFWALWALIQNQYSTIDFDFLRYAVIRFNQYFKVKPQASALEMPK</original>
    <variation>GPSCVSSTMTASLQCCRVGNRHGEIARLTLSGLFPGVSLLLGSLGPHPEPVLHHRL</variation>
    <location>
        <begin position="339"/>
        <end position="386"/>
    </location>
</feature>
<feature type="sequence variant" id="VAR_022145" description="In dbSNP:rs3737657." evidence="3">
    <original>R</original>
    <variation>Q</variation>
    <location>
        <position position="227"/>
    </location>
</feature>
<feature type="sequence conflict" description="In Ref. 1; BAA91793." evidence="5" ref="1">
    <original>P</original>
    <variation>Q</variation>
    <location>
        <position position="10"/>
    </location>
</feature>
<feature type="sequence conflict" description="In Ref. 1; BAH13637." evidence="5" ref="1">
    <original>Q</original>
    <variation>R</variation>
    <location>
        <position position="148"/>
    </location>
</feature>
<feature type="sequence conflict" description="In Ref. 1; BAH13637." evidence="5" ref="1">
    <original>S</original>
    <variation>F</variation>
    <location>
        <position position="241"/>
    </location>
</feature>
<evidence type="ECO:0000250" key="1"/>
<evidence type="ECO:0000269" key="2">
    <source>
    </source>
</evidence>
<evidence type="ECO:0000269" key="3">
    <source>
    </source>
</evidence>
<evidence type="ECO:0000303" key="4">
    <source>
    </source>
</evidence>
<evidence type="ECO:0000305" key="5"/>
<gene>
    <name type="primary">ETNK2</name>
    <name type="synonym">EKI2</name>
    <name type="ORF">HMFT1716</name>
</gene>
<accession>Q9NVF9</accession>
<accession>B7Z7K1</accession>
<accession>Q5SXX5</accession>
<accession>Q68CK3</accession>
<accession>Q96G05</accession>
<reference key="1">
    <citation type="journal article" date="2004" name="Nat. Genet.">
        <title>Complete sequencing and characterization of 21,243 full-length human cDNAs.</title>
        <authorList>
            <person name="Ota T."/>
            <person name="Suzuki Y."/>
            <person name="Nishikawa T."/>
            <person name="Otsuki T."/>
            <person name="Sugiyama T."/>
            <person name="Irie R."/>
            <person name="Wakamatsu A."/>
            <person name="Hayashi K."/>
            <person name="Sato H."/>
            <person name="Nagai K."/>
            <person name="Kimura K."/>
            <person name="Makita H."/>
            <person name="Sekine M."/>
            <person name="Obayashi M."/>
            <person name="Nishi T."/>
            <person name="Shibahara T."/>
            <person name="Tanaka T."/>
            <person name="Ishii S."/>
            <person name="Yamamoto J."/>
            <person name="Saito K."/>
            <person name="Kawai Y."/>
            <person name="Isono Y."/>
            <person name="Nakamura Y."/>
            <person name="Nagahari K."/>
            <person name="Murakami K."/>
            <person name="Yasuda T."/>
            <person name="Iwayanagi T."/>
            <person name="Wagatsuma M."/>
            <person name="Shiratori A."/>
            <person name="Sudo H."/>
            <person name="Hosoiri T."/>
            <person name="Kaku Y."/>
            <person name="Kodaira H."/>
            <person name="Kondo H."/>
            <person name="Sugawara M."/>
            <person name="Takahashi M."/>
            <person name="Kanda K."/>
            <person name="Yokoi T."/>
            <person name="Furuya T."/>
            <person name="Kikkawa E."/>
            <person name="Omura Y."/>
            <person name="Abe K."/>
            <person name="Kamihara K."/>
            <person name="Katsuta N."/>
            <person name="Sato K."/>
            <person name="Tanikawa M."/>
            <person name="Yamazaki M."/>
            <person name="Ninomiya K."/>
            <person name="Ishibashi T."/>
            <person name="Yamashita H."/>
            <person name="Murakawa K."/>
            <person name="Fujimori K."/>
            <person name="Tanai H."/>
            <person name="Kimata M."/>
            <person name="Watanabe M."/>
            <person name="Hiraoka S."/>
            <person name="Chiba Y."/>
            <person name="Ishida S."/>
            <person name="Ono Y."/>
            <person name="Takiguchi S."/>
            <person name="Watanabe S."/>
            <person name="Yosida M."/>
            <person name="Hotuta T."/>
            <person name="Kusano J."/>
            <person name="Kanehori K."/>
            <person name="Takahashi-Fujii A."/>
            <person name="Hara H."/>
            <person name="Tanase T.-O."/>
            <person name="Nomura Y."/>
            <person name="Togiya S."/>
            <person name="Komai F."/>
            <person name="Hara R."/>
            <person name="Takeuchi K."/>
            <person name="Arita M."/>
            <person name="Imose N."/>
            <person name="Musashino K."/>
            <person name="Yuuki H."/>
            <person name="Oshima A."/>
            <person name="Sasaki N."/>
            <person name="Aotsuka S."/>
            <person name="Yoshikawa Y."/>
            <person name="Matsunawa H."/>
            <person name="Ichihara T."/>
            <person name="Shiohata N."/>
            <person name="Sano S."/>
            <person name="Moriya S."/>
            <person name="Momiyama H."/>
            <person name="Satoh N."/>
            <person name="Takami S."/>
            <person name="Terashima Y."/>
            <person name="Suzuki O."/>
            <person name="Nakagawa S."/>
            <person name="Senoh A."/>
            <person name="Mizoguchi H."/>
            <person name="Goto Y."/>
            <person name="Shimizu F."/>
            <person name="Wakebe H."/>
            <person name="Hishigaki H."/>
            <person name="Watanabe T."/>
            <person name="Sugiyama A."/>
            <person name="Takemoto M."/>
            <person name="Kawakami B."/>
            <person name="Yamazaki M."/>
            <person name="Watanabe K."/>
            <person name="Kumagai A."/>
            <person name="Itakura S."/>
            <person name="Fukuzumi Y."/>
            <person name="Fujimori Y."/>
            <person name="Komiyama M."/>
            <person name="Tashiro H."/>
            <person name="Tanigami A."/>
            <person name="Fujiwara T."/>
            <person name="Ono T."/>
            <person name="Yamada K."/>
            <person name="Fujii Y."/>
            <person name="Ozaki K."/>
            <person name="Hirao M."/>
            <person name="Ohmori Y."/>
            <person name="Kawabata A."/>
            <person name="Hikiji T."/>
            <person name="Kobatake N."/>
            <person name="Inagaki H."/>
            <person name="Ikema Y."/>
            <person name="Okamoto S."/>
            <person name="Okitani R."/>
            <person name="Kawakami T."/>
            <person name="Noguchi S."/>
            <person name="Itoh T."/>
            <person name="Shigeta K."/>
            <person name="Senba T."/>
            <person name="Matsumura K."/>
            <person name="Nakajima Y."/>
            <person name="Mizuno T."/>
            <person name="Morinaga M."/>
            <person name="Sasaki M."/>
            <person name="Togashi T."/>
            <person name="Oyama M."/>
            <person name="Hata H."/>
            <person name="Watanabe M."/>
            <person name="Komatsu T."/>
            <person name="Mizushima-Sugano J."/>
            <person name="Satoh T."/>
            <person name="Shirai Y."/>
            <person name="Takahashi Y."/>
            <person name="Nakagawa K."/>
            <person name="Okumura K."/>
            <person name="Nagase T."/>
            <person name="Nomura N."/>
            <person name="Kikuchi H."/>
            <person name="Masuho Y."/>
            <person name="Yamashita R."/>
            <person name="Nakai K."/>
            <person name="Yada T."/>
            <person name="Nakamura Y."/>
            <person name="Ohara O."/>
            <person name="Isogai T."/>
            <person name="Sugano S."/>
        </authorList>
    </citation>
    <scope>NUCLEOTIDE SEQUENCE [LARGE SCALE MRNA] (ISOFORM 2)</scope>
    <scope>NUCLEOTIDE SEQUENCE [LARGE SCALE MRNA] OF 25-386 (ISOFORM 3)</scope>
    <source>
        <tissue>Testis</tissue>
    </source>
</reference>
<reference key="2">
    <citation type="journal article" date="2006" name="Nature">
        <title>The DNA sequence and biological annotation of human chromosome 1.</title>
        <authorList>
            <person name="Gregory S.G."/>
            <person name="Barlow K.F."/>
            <person name="McLay K.E."/>
            <person name="Kaul R."/>
            <person name="Swarbreck D."/>
            <person name="Dunham A."/>
            <person name="Scott C.E."/>
            <person name="Howe K.L."/>
            <person name="Woodfine K."/>
            <person name="Spencer C.C.A."/>
            <person name="Jones M.C."/>
            <person name="Gillson C."/>
            <person name="Searle S."/>
            <person name="Zhou Y."/>
            <person name="Kokocinski F."/>
            <person name="McDonald L."/>
            <person name="Evans R."/>
            <person name="Phillips K."/>
            <person name="Atkinson A."/>
            <person name="Cooper R."/>
            <person name="Jones C."/>
            <person name="Hall R.E."/>
            <person name="Andrews T.D."/>
            <person name="Lloyd C."/>
            <person name="Ainscough R."/>
            <person name="Almeida J.P."/>
            <person name="Ambrose K.D."/>
            <person name="Anderson F."/>
            <person name="Andrew R.W."/>
            <person name="Ashwell R.I.S."/>
            <person name="Aubin K."/>
            <person name="Babbage A.K."/>
            <person name="Bagguley C.L."/>
            <person name="Bailey J."/>
            <person name="Beasley H."/>
            <person name="Bethel G."/>
            <person name="Bird C.P."/>
            <person name="Bray-Allen S."/>
            <person name="Brown J.Y."/>
            <person name="Brown A.J."/>
            <person name="Buckley D."/>
            <person name="Burton J."/>
            <person name="Bye J."/>
            <person name="Carder C."/>
            <person name="Chapman J.C."/>
            <person name="Clark S.Y."/>
            <person name="Clarke G."/>
            <person name="Clee C."/>
            <person name="Cobley V."/>
            <person name="Collier R.E."/>
            <person name="Corby N."/>
            <person name="Coville G.J."/>
            <person name="Davies J."/>
            <person name="Deadman R."/>
            <person name="Dunn M."/>
            <person name="Earthrowl M."/>
            <person name="Ellington A.G."/>
            <person name="Errington H."/>
            <person name="Frankish A."/>
            <person name="Frankland J."/>
            <person name="French L."/>
            <person name="Garner P."/>
            <person name="Garnett J."/>
            <person name="Gay L."/>
            <person name="Ghori M.R.J."/>
            <person name="Gibson R."/>
            <person name="Gilby L.M."/>
            <person name="Gillett W."/>
            <person name="Glithero R.J."/>
            <person name="Grafham D.V."/>
            <person name="Griffiths C."/>
            <person name="Griffiths-Jones S."/>
            <person name="Grocock R."/>
            <person name="Hammond S."/>
            <person name="Harrison E.S.I."/>
            <person name="Hart E."/>
            <person name="Haugen E."/>
            <person name="Heath P.D."/>
            <person name="Holmes S."/>
            <person name="Holt K."/>
            <person name="Howden P.J."/>
            <person name="Hunt A.R."/>
            <person name="Hunt S.E."/>
            <person name="Hunter G."/>
            <person name="Isherwood J."/>
            <person name="James R."/>
            <person name="Johnson C."/>
            <person name="Johnson D."/>
            <person name="Joy A."/>
            <person name="Kay M."/>
            <person name="Kershaw J.K."/>
            <person name="Kibukawa M."/>
            <person name="Kimberley A.M."/>
            <person name="King A."/>
            <person name="Knights A.J."/>
            <person name="Lad H."/>
            <person name="Laird G."/>
            <person name="Lawlor S."/>
            <person name="Leongamornlert D.A."/>
            <person name="Lloyd D.M."/>
            <person name="Loveland J."/>
            <person name="Lovell J."/>
            <person name="Lush M.J."/>
            <person name="Lyne R."/>
            <person name="Martin S."/>
            <person name="Mashreghi-Mohammadi M."/>
            <person name="Matthews L."/>
            <person name="Matthews N.S.W."/>
            <person name="McLaren S."/>
            <person name="Milne S."/>
            <person name="Mistry S."/>
            <person name="Moore M.J.F."/>
            <person name="Nickerson T."/>
            <person name="O'Dell C.N."/>
            <person name="Oliver K."/>
            <person name="Palmeiri A."/>
            <person name="Palmer S.A."/>
            <person name="Parker A."/>
            <person name="Patel D."/>
            <person name="Pearce A.V."/>
            <person name="Peck A.I."/>
            <person name="Pelan S."/>
            <person name="Phelps K."/>
            <person name="Phillimore B.J."/>
            <person name="Plumb R."/>
            <person name="Rajan J."/>
            <person name="Raymond C."/>
            <person name="Rouse G."/>
            <person name="Saenphimmachak C."/>
            <person name="Sehra H.K."/>
            <person name="Sheridan E."/>
            <person name="Shownkeen R."/>
            <person name="Sims S."/>
            <person name="Skuce C.D."/>
            <person name="Smith M."/>
            <person name="Steward C."/>
            <person name="Subramanian S."/>
            <person name="Sycamore N."/>
            <person name="Tracey A."/>
            <person name="Tromans A."/>
            <person name="Van Helmond Z."/>
            <person name="Wall M."/>
            <person name="Wallis J.M."/>
            <person name="White S."/>
            <person name="Whitehead S.L."/>
            <person name="Wilkinson J.E."/>
            <person name="Willey D.L."/>
            <person name="Williams H."/>
            <person name="Wilming L."/>
            <person name="Wray P.W."/>
            <person name="Wu Z."/>
            <person name="Coulson A."/>
            <person name="Vaudin M."/>
            <person name="Sulston J.E."/>
            <person name="Durbin R.M."/>
            <person name="Hubbard T."/>
            <person name="Wooster R."/>
            <person name="Dunham I."/>
            <person name="Carter N.P."/>
            <person name="McVean G."/>
            <person name="Ross M.T."/>
            <person name="Harrow J."/>
            <person name="Olson M.V."/>
            <person name="Beck S."/>
            <person name="Rogers J."/>
            <person name="Bentley D.R."/>
        </authorList>
    </citation>
    <scope>NUCLEOTIDE SEQUENCE [LARGE SCALE GENOMIC DNA]</scope>
</reference>
<reference key="3">
    <citation type="submission" date="2005-07" db="EMBL/GenBank/DDBJ databases">
        <authorList>
            <person name="Mural R.J."/>
            <person name="Istrail S."/>
            <person name="Sutton G.G."/>
            <person name="Florea L."/>
            <person name="Halpern A.L."/>
            <person name="Mobarry C.M."/>
            <person name="Lippert R."/>
            <person name="Walenz B."/>
            <person name="Shatkay H."/>
            <person name="Dew I."/>
            <person name="Miller J.R."/>
            <person name="Flanigan M.J."/>
            <person name="Edwards N.J."/>
            <person name="Bolanos R."/>
            <person name="Fasulo D."/>
            <person name="Halldorsson B.V."/>
            <person name="Hannenhalli S."/>
            <person name="Turner R."/>
            <person name="Yooseph S."/>
            <person name="Lu F."/>
            <person name="Nusskern D.R."/>
            <person name="Shue B.C."/>
            <person name="Zheng X.H."/>
            <person name="Zhong F."/>
            <person name="Delcher A.L."/>
            <person name="Huson D.H."/>
            <person name="Kravitz S.A."/>
            <person name="Mouchard L."/>
            <person name="Reinert K."/>
            <person name="Remington K.A."/>
            <person name="Clark A.G."/>
            <person name="Waterman M.S."/>
            <person name="Eichler E.E."/>
            <person name="Adams M.D."/>
            <person name="Hunkapiller M.W."/>
            <person name="Myers E.W."/>
            <person name="Venter J.C."/>
        </authorList>
    </citation>
    <scope>NUCLEOTIDE SEQUENCE [LARGE SCALE GENOMIC DNA]</scope>
</reference>
<reference key="4">
    <citation type="journal article" date="2004" name="Genome Res.">
        <title>The status, quality, and expansion of the NIH full-length cDNA project: the Mammalian Gene Collection (MGC).</title>
        <authorList>
            <consortium name="The MGC Project Team"/>
        </authorList>
    </citation>
    <scope>NUCLEOTIDE SEQUENCE [LARGE SCALE MRNA] (ISOFORM 1)</scope>
    <source>
        <tissue>Uterus</tissue>
    </source>
</reference>
<reference key="5">
    <citation type="journal article" date="2004" name="Oncogene">
        <title>Expression profiling and differential screening between hepatoblastomas and the corresponding normal livers: identification of high expression of the PLK1 oncogene as a poor-prognostic indicator of hepatoblastomas.</title>
        <authorList>
            <person name="Yamada S."/>
            <person name="Ohira M."/>
            <person name="Horie H."/>
            <person name="Ando K."/>
            <person name="Takayasu H."/>
            <person name="Suzuki Y."/>
            <person name="Sugano S."/>
            <person name="Hirata T."/>
            <person name="Goto T."/>
            <person name="Matsunaga T."/>
            <person name="Hiyama E."/>
            <person name="Hayashi Y."/>
            <person name="Ando H."/>
            <person name="Suita S."/>
            <person name="Kaneko M."/>
            <person name="Sasaki F."/>
            <person name="Hashizume K."/>
            <person name="Ohnuma N."/>
            <person name="Nakagawara A."/>
        </authorList>
    </citation>
    <scope>NUCLEOTIDE SEQUENCE [LARGE SCALE MRNA] OF 25-386 (ISOFORM 1)</scope>
    <scope>VARIANT GLN-227</scope>
    <source>
        <tissue>Hepatoblastoma</tissue>
    </source>
</reference>
<reference key="6">
    <citation type="journal article" date="2001" name="J. Biol. Chem.">
        <title>Overexpression of a mammalian ethanolamine-specific kinase accelerates the CDP-ethanolamine pathway.</title>
        <authorList>
            <person name="Lykidis A."/>
            <person name="Wang J."/>
            <person name="Karim M.A."/>
            <person name="Jackowski S."/>
        </authorList>
    </citation>
    <scope>TISSUE SPECIFICITY</scope>
</reference>
<protein>
    <recommendedName>
        <fullName>Ethanolamine kinase 2</fullName>
        <shortName>EKI 2</shortName>
        <ecNumber>2.7.1.82</ecNumber>
    </recommendedName>
    <alternativeName>
        <fullName>Ethanolamine kinase-like protein</fullName>
    </alternativeName>
</protein>
<name>EKI2_HUMAN</name>